<organism>
    <name type="scientific">Brucella melitensis biotype 2 (strain ATCC 23457)</name>
    <dbReference type="NCBI Taxonomy" id="546272"/>
    <lineage>
        <taxon>Bacteria</taxon>
        <taxon>Pseudomonadati</taxon>
        <taxon>Pseudomonadota</taxon>
        <taxon>Alphaproteobacteria</taxon>
        <taxon>Hyphomicrobiales</taxon>
        <taxon>Brucellaceae</taxon>
        <taxon>Brucella/Ochrobactrum group</taxon>
        <taxon>Brucella</taxon>
    </lineage>
</organism>
<keyword id="KW-0030">Aminoacyl-tRNA synthetase</keyword>
<keyword id="KW-0067">ATP-binding</keyword>
<keyword id="KW-0963">Cytoplasm</keyword>
<keyword id="KW-0436">Ligase</keyword>
<keyword id="KW-0547">Nucleotide-binding</keyword>
<keyword id="KW-0648">Protein biosynthesis</keyword>
<protein>
    <recommendedName>
        <fullName evidence="1">Proline--tRNA ligase</fullName>
        <ecNumber evidence="1">6.1.1.15</ecNumber>
    </recommendedName>
    <alternativeName>
        <fullName evidence="1">Prolyl-tRNA synthetase</fullName>
        <shortName evidence="1">ProRS</shortName>
    </alternativeName>
</protein>
<feature type="chain" id="PRO_1000185523" description="Proline--tRNA ligase">
    <location>
        <begin position="1"/>
        <end position="442"/>
    </location>
</feature>
<evidence type="ECO:0000255" key="1">
    <source>
        <dbReference type="HAMAP-Rule" id="MF_01570"/>
    </source>
</evidence>
<comment type="function">
    <text evidence="1">Catalyzes the attachment of proline to tRNA(Pro) in a two-step reaction: proline is first activated by ATP to form Pro-AMP and then transferred to the acceptor end of tRNA(Pro).</text>
</comment>
<comment type="catalytic activity">
    <reaction evidence="1">
        <text>tRNA(Pro) + L-proline + ATP = L-prolyl-tRNA(Pro) + AMP + diphosphate</text>
        <dbReference type="Rhea" id="RHEA:14305"/>
        <dbReference type="Rhea" id="RHEA-COMP:9700"/>
        <dbReference type="Rhea" id="RHEA-COMP:9702"/>
        <dbReference type="ChEBI" id="CHEBI:30616"/>
        <dbReference type="ChEBI" id="CHEBI:33019"/>
        <dbReference type="ChEBI" id="CHEBI:60039"/>
        <dbReference type="ChEBI" id="CHEBI:78442"/>
        <dbReference type="ChEBI" id="CHEBI:78532"/>
        <dbReference type="ChEBI" id="CHEBI:456215"/>
        <dbReference type="EC" id="6.1.1.15"/>
    </reaction>
</comment>
<comment type="subunit">
    <text evidence="1">Homodimer.</text>
</comment>
<comment type="subcellular location">
    <subcellularLocation>
        <location evidence="1">Cytoplasm</location>
    </subcellularLocation>
</comment>
<comment type="similarity">
    <text evidence="1">Belongs to the class-II aminoacyl-tRNA synthetase family. ProS type 2 subfamily.</text>
</comment>
<sequence length="442" mass="49477">MRLSRYFLPILKENPKEAEIVSHRLMLRSGMIRQQSAGIYSWLPIGLKVLNKVCTIIREEQNRAGANEILMPTIQSADLWRESGRYDAYGKEMLRIQDRQKREMLFGPTNEEMVTDIFRSYVRSYKDLPLNLYHIQWKFRDEVRPRFGVMRSREFLMKDAYSFDLDYEGAKMAYYRMFVSYLRTFARVGLQAIPMRADTGPIGGDLSHEFIILAETGESQVYCDRAYLDLAVPGADTDFRNDAQLTDTVTRWTTPYAATDEMHDEADWAKVKPESQVSARGIEVGHIFHFGTKYSEPMGAKVQGPDGKEHLVSMGSYGIGPSRLVAAAIEASHDDAGIIWPKTIAPFGAGIVNMKPGDEGCDGVSEKLYEALTNAGVDPLLDDKDERPGAKFATIDLIGLPTQVIVGPRGVAAGEVEVKDRKTGERQSLGIEAAINMLTAQA</sequence>
<name>SYP_BRUMB</name>
<reference key="1">
    <citation type="submission" date="2009-03" db="EMBL/GenBank/DDBJ databases">
        <title>Brucella melitensis ATCC 23457 whole genome shotgun sequencing project.</title>
        <authorList>
            <person name="Setubal J.C."/>
            <person name="Boyle S."/>
            <person name="Crasta O.R."/>
            <person name="Gillespie J.J."/>
            <person name="Kenyon R.W."/>
            <person name="Lu J."/>
            <person name="Mane S."/>
            <person name="Nagrani S."/>
            <person name="Shallom J.M."/>
            <person name="Shallom S."/>
            <person name="Shukla M."/>
            <person name="Snyder E.E."/>
            <person name="Sobral B.W."/>
            <person name="Wattam A.R."/>
            <person name="Will R."/>
            <person name="Williams K."/>
            <person name="Yoo H."/>
            <person name="Munk C."/>
            <person name="Tapia R."/>
            <person name="Han C."/>
            <person name="Detter J.C."/>
            <person name="Bruce D."/>
            <person name="Brettin T.S."/>
        </authorList>
    </citation>
    <scope>NUCLEOTIDE SEQUENCE [LARGE SCALE GENOMIC DNA]</scope>
    <source>
        <strain>ATCC 23457</strain>
    </source>
</reference>
<gene>
    <name evidence="1" type="primary">proS</name>
    <name type="ordered locus">BMEA_A0862</name>
</gene>
<proteinExistence type="inferred from homology"/>
<dbReference type="EC" id="6.1.1.15" evidence="1"/>
<dbReference type="EMBL" id="CP001488">
    <property type="protein sequence ID" value="ACO00615.1"/>
    <property type="molecule type" value="Genomic_DNA"/>
</dbReference>
<dbReference type="RefSeq" id="WP_004683631.1">
    <property type="nucleotide sequence ID" value="NC_012441.1"/>
</dbReference>
<dbReference type="SMR" id="C0RIF7"/>
<dbReference type="GeneID" id="29593980"/>
<dbReference type="KEGG" id="bmi:BMEA_A0862"/>
<dbReference type="HOGENOM" id="CLU_016739_4_2_5"/>
<dbReference type="Proteomes" id="UP000001748">
    <property type="component" value="Chromosome I"/>
</dbReference>
<dbReference type="GO" id="GO:0005829">
    <property type="term" value="C:cytosol"/>
    <property type="evidence" value="ECO:0007669"/>
    <property type="project" value="TreeGrafter"/>
</dbReference>
<dbReference type="GO" id="GO:0005524">
    <property type="term" value="F:ATP binding"/>
    <property type="evidence" value="ECO:0007669"/>
    <property type="project" value="UniProtKB-UniRule"/>
</dbReference>
<dbReference type="GO" id="GO:0004827">
    <property type="term" value="F:proline-tRNA ligase activity"/>
    <property type="evidence" value="ECO:0007669"/>
    <property type="project" value="UniProtKB-UniRule"/>
</dbReference>
<dbReference type="GO" id="GO:0006433">
    <property type="term" value="P:prolyl-tRNA aminoacylation"/>
    <property type="evidence" value="ECO:0007669"/>
    <property type="project" value="UniProtKB-UniRule"/>
</dbReference>
<dbReference type="CDD" id="cd00861">
    <property type="entry name" value="ProRS_anticodon_short"/>
    <property type="match status" value="1"/>
</dbReference>
<dbReference type="CDD" id="cd00779">
    <property type="entry name" value="ProRS_core_prok"/>
    <property type="match status" value="1"/>
</dbReference>
<dbReference type="FunFam" id="3.30.930.10:FF:000042">
    <property type="entry name" value="probable proline--tRNA ligase, mitochondrial"/>
    <property type="match status" value="1"/>
</dbReference>
<dbReference type="Gene3D" id="3.40.50.800">
    <property type="entry name" value="Anticodon-binding domain"/>
    <property type="match status" value="1"/>
</dbReference>
<dbReference type="Gene3D" id="3.30.930.10">
    <property type="entry name" value="Bira Bifunctional Protein, Domain 2"/>
    <property type="match status" value="1"/>
</dbReference>
<dbReference type="HAMAP" id="MF_01570">
    <property type="entry name" value="Pro_tRNA_synth_type2"/>
    <property type="match status" value="1"/>
</dbReference>
<dbReference type="InterPro" id="IPR002314">
    <property type="entry name" value="aa-tRNA-synt_IIb"/>
</dbReference>
<dbReference type="InterPro" id="IPR006195">
    <property type="entry name" value="aa-tRNA-synth_II"/>
</dbReference>
<dbReference type="InterPro" id="IPR045864">
    <property type="entry name" value="aa-tRNA-synth_II/BPL/LPL"/>
</dbReference>
<dbReference type="InterPro" id="IPR004154">
    <property type="entry name" value="Anticodon-bd"/>
</dbReference>
<dbReference type="InterPro" id="IPR036621">
    <property type="entry name" value="Anticodon-bd_dom_sf"/>
</dbReference>
<dbReference type="InterPro" id="IPR002316">
    <property type="entry name" value="Pro-tRNA-ligase_IIa"/>
</dbReference>
<dbReference type="InterPro" id="IPR004500">
    <property type="entry name" value="Pro-tRNA-synth_IIa_bac-type"/>
</dbReference>
<dbReference type="InterPro" id="IPR050062">
    <property type="entry name" value="Pro-tRNA_synthetase"/>
</dbReference>
<dbReference type="InterPro" id="IPR023716">
    <property type="entry name" value="Prolyl-tRNA_ligase_IIa_type2"/>
</dbReference>
<dbReference type="InterPro" id="IPR044140">
    <property type="entry name" value="ProRS_anticodon_short"/>
</dbReference>
<dbReference type="InterPro" id="IPR033730">
    <property type="entry name" value="ProRS_core_prok"/>
</dbReference>
<dbReference type="NCBIfam" id="NF008979">
    <property type="entry name" value="PRK12325.1"/>
    <property type="match status" value="1"/>
</dbReference>
<dbReference type="NCBIfam" id="TIGR00409">
    <property type="entry name" value="proS_fam_II"/>
    <property type="match status" value="1"/>
</dbReference>
<dbReference type="PANTHER" id="PTHR42753">
    <property type="entry name" value="MITOCHONDRIAL RIBOSOME PROTEIN L39/PROLYL-TRNA LIGASE FAMILY MEMBER"/>
    <property type="match status" value="1"/>
</dbReference>
<dbReference type="PANTHER" id="PTHR42753:SF2">
    <property type="entry name" value="PROLINE--TRNA LIGASE"/>
    <property type="match status" value="1"/>
</dbReference>
<dbReference type="Pfam" id="PF03129">
    <property type="entry name" value="HGTP_anticodon"/>
    <property type="match status" value="1"/>
</dbReference>
<dbReference type="Pfam" id="PF00587">
    <property type="entry name" value="tRNA-synt_2b"/>
    <property type="match status" value="1"/>
</dbReference>
<dbReference type="PRINTS" id="PR01046">
    <property type="entry name" value="TRNASYNTHPRO"/>
</dbReference>
<dbReference type="SUPFAM" id="SSF52954">
    <property type="entry name" value="Class II aaRS ABD-related"/>
    <property type="match status" value="1"/>
</dbReference>
<dbReference type="SUPFAM" id="SSF55681">
    <property type="entry name" value="Class II aaRS and biotin synthetases"/>
    <property type="match status" value="1"/>
</dbReference>
<dbReference type="PROSITE" id="PS50862">
    <property type="entry name" value="AA_TRNA_LIGASE_II"/>
    <property type="match status" value="1"/>
</dbReference>
<accession>C0RIF7</accession>